<evidence type="ECO:0000250" key="1"/>
<evidence type="ECO:0000250" key="2">
    <source>
        <dbReference type="UniProtKB" id="O88900"/>
    </source>
</evidence>
<evidence type="ECO:0000250" key="3">
    <source>
        <dbReference type="UniProtKB" id="Q14449"/>
    </source>
</evidence>
<evidence type="ECO:0000255" key="4">
    <source>
        <dbReference type="PROSITE-ProRule" id="PRU00145"/>
    </source>
</evidence>
<evidence type="ECO:0000255" key="5">
    <source>
        <dbReference type="PROSITE-ProRule" id="PRU00166"/>
    </source>
</evidence>
<evidence type="ECO:0000255" key="6">
    <source>
        <dbReference type="PROSITE-ProRule" id="PRU00191"/>
    </source>
</evidence>
<evidence type="ECO:0000256" key="7">
    <source>
        <dbReference type="SAM" id="MobiDB-lite"/>
    </source>
</evidence>
<evidence type="ECO:0000269" key="8">
    <source>
    </source>
</evidence>
<evidence type="ECO:0000305" key="9"/>
<evidence type="ECO:0007744" key="10">
    <source>
    </source>
</evidence>
<accession>Q9JLM9</accession>
<accession>Q3UI77</accession>
<accession>Q8VDI2</accession>
<accession>Q9CR03</accession>
<protein>
    <recommendedName>
        <fullName>Growth factor receptor-bound protein 14</fullName>
    </recommendedName>
    <alternativeName>
        <fullName>GRB14 adapter protein</fullName>
    </alternativeName>
</protein>
<sequence length="538" mass="60573">MTTSLQDGQSAAGRAGAQDSPLAVQVCRVAQGKGDAQDPAQVPGLHALSPASDATLRGAIDRRKMKDLDVLEKPPIPNPFPELCCSPLTSVLSAGLFPRANSRKKQVIKVYSEDETSRALEVPSDITARDVCQLLILKNHYVDDNSWTLFEHLSHIGLERTVEDHELPTEVLSHWGVEEDNKLYLRKNYAKYEFFKNPMYFFPEHMVSFAAEMNGDRSPTQILQVFLSSSTYPEIHGFLHAKEQGKKSWKKAYFFLRRSGLYFSTKGTSKEPRHLQLFSEFSTSHVYMSLAGKKKHGAPTPYGFCLKPNKAGGPRDLKMLCAEEEQSRTCWVTAIRLLKDGMQLYQNYMHPYQGRSACNSQSMSPMRSVSENSLVAMDFSGEKSRVIDNPTEALSVAVEEGLAWRKKGCLRLGNHGSPSAPSQSSAVNMALHRSQPWFHHRISRDEAQRLIIRQGPVDGVFLVRDSQSNPRTFVLSMSHGQKIKHYQIIPVEDDGELFHTLDDGHTKFTDLIQLVEFYQLNRGVLPCKLKHYCARMAV</sequence>
<gene>
    <name type="primary">Grb14</name>
</gene>
<name>GRB14_MOUSE</name>
<reference key="1">
    <citation type="journal article" date="2000" name="J. Biol. Chem.">
        <title>Association of fibroblast growth factor receptor 1 with the adaptor protein Grb14. Characterization of a new receptor binding partner.</title>
        <authorList>
            <person name="Reilly J.F."/>
            <person name="Mickey G."/>
            <person name="Maher P.A."/>
        </authorList>
    </citation>
    <scope>NUCLEOTIDE SEQUENCE [MRNA]</scope>
</reference>
<reference key="2">
    <citation type="journal article" date="2005" name="Science">
        <title>The transcriptional landscape of the mammalian genome.</title>
        <authorList>
            <person name="Carninci P."/>
            <person name="Kasukawa T."/>
            <person name="Katayama S."/>
            <person name="Gough J."/>
            <person name="Frith M.C."/>
            <person name="Maeda N."/>
            <person name="Oyama R."/>
            <person name="Ravasi T."/>
            <person name="Lenhard B."/>
            <person name="Wells C."/>
            <person name="Kodzius R."/>
            <person name="Shimokawa K."/>
            <person name="Bajic V.B."/>
            <person name="Brenner S.E."/>
            <person name="Batalov S."/>
            <person name="Forrest A.R."/>
            <person name="Zavolan M."/>
            <person name="Davis M.J."/>
            <person name="Wilming L.G."/>
            <person name="Aidinis V."/>
            <person name="Allen J.E."/>
            <person name="Ambesi-Impiombato A."/>
            <person name="Apweiler R."/>
            <person name="Aturaliya R.N."/>
            <person name="Bailey T.L."/>
            <person name="Bansal M."/>
            <person name="Baxter L."/>
            <person name="Beisel K.W."/>
            <person name="Bersano T."/>
            <person name="Bono H."/>
            <person name="Chalk A.M."/>
            <person name="Chiu K.P."/>
            <person name="Choudhary V."/>
            <person name="Christoffels A."/>
            <person name="Clutterbuck D.R."/>
            <person name="Crowe M.L."/>
            <person name="Dalla E."/>
            <person name="Dalrymple B.P."/>
            <person name="de Bono B."/>
            <person name="Della Gatta G."/>
            <person name="di Bernardo D."/>
            <person name="Down T."/>
            <person name="Engstrom P."/>
            <person name="Fagiolini M."/>
            <person name="Faulkner G."/>
            <person name="Fletcher C.F."/>
            <person name="Fukushima T."/>
            <person name="Furuno M."/>
            <person name="Futaki S."/>
            <person name="Gariboldi M."/>
            <person name="Georgii-Hemming P."/>
            <person name="Gingeras T.R."/>
            <person name="Gojobori T."/>
            <person name="Green R.E."/>
            <person name="Gustincich S."/>
            <person name="Harbers M."/>
            <person name="Hayashi Y."/>
            <person name="Hensch T.K."/>
            <person name="Hirokawa N."/>
            <person name="Hill D."/>
            <person name="Huminiecki L."/>
            <person name="Iacono M."/>
            <person name="Ikeo K."/>
            <person name="Iwama A."/>
            <person name="Ishikawa T."/>
            <person name="Jakt M."/>
            <person name="Kanapin A."/>
            <person name="Katoh M."/>
            <person name="Kawasawa Y."/>
            <person name="Kelso J."/>
            <person name="Kitamura H."/>
            <person name="Kitano H."/>
            <person name="Kollias G."/>
            <person name="Krishnan S.P."/>
            <person name="Kruger A."/>
            <person name="Kummerfeld S.K."/>
            <person name="Kurochkin I.V."/>
            <person name="Lareau L.F."/>
            <person name="Lazarevic D."/>
            <person name="Lipovich L."/>
            <person name="Liu J."/>
            <person name="Liuni S."/>
            <person name="McWilliam S."/>
            <person name="Madan Babu M."/>
            <person name="Madera M."/>
            <person name="Marchionni L."/>
            <person name="Matsuda H."/>
            <person name="Matsuzawa S."/>
            <person name="Miki H."/>
            <person name="Mignone F."/>
            <person name="Miyake S."/>
            <person name="Morris K."/>
            <person name="Mottagui-Tabar S."/>
            <person name="Mulder N."/>
            <person name="Nakano N."/>
            <person name="Nakauchi H."/>
            <person name="Ng P."/>
            <person name="Nilsson R."/>
            <person name="Nishiguchi S."/>
            <person name="Nishikawa S."/>
            <person name="Nori F."/>
            <person name="Ohara O."/>
            <person name="Okazaki Y."/>
            <person name="Orlando V."/>
            <person name="Pang K.C."/>
            <person name="Pavan W.J."/>
            <person name="Pavesi G."/>
            <person name="Pesole G."/>
            <person name="Petrovsky N."/>
            <person name="Piazza S."/>
            <person name="Reed J."/>
            <person name="Reid J.F."/>
            <person name="Ring B.Z."/>
            <person name="Ringwald M."/>
            <person name="Rost B."/>
            <person name="Ruan Y."/>
            <person name="Salzberg S.L."/>
            <person name="Sandelin A."/>
            <person name="Schneider C."/>
            <person name="Schoenbach C."/>
            <person name="Sekiguchi K."/>
            <person name="Semple C.A."/>
            <person name="Seno S."/>
            <person name="Sessa L."/>
            <person name="Sheng Y."/>
            <person name="Shibata Y."/>
            <person name="Shimada H."/>
            <person name="Shimada K."/>
            <person name="Silva D."/>
            <person name="Sinclair B."/>
            <person name="Sperling S."/>
            <person name="Stupka E."/>
            <person name="Sugiura K."/>
            <person name="Sultana R."/>
            <person name="Takenaka Y."/>
            <person name="Taki K."/>
            <person name="Tammoja K."/>
            <person name="Tan S.L."/>
            <person name="Tang S."/>
            <person name="Taylor M.S."/>
            <person name="Tegner J."/>
            <person name="Teichmann S.A."/>
            <person name="Ueda H.R."/>
            <person name="van Nimwegen E."/>
            <person name="Verardo R."/>
            <person name="Wei C.L."/>
            <person name="Yagi K."/>
            <person name="Yamanishi H."/>
            <person name="Zabarovsky E."/>
            <person name="Zhu S."/>
            <person name="Zimmer A."/>
            <person name="Hide W."/>
            <person name="Bult C."/>
            <person name="Grimmond S.M."/>
            <person name="Teasdale R.D."/>
            <person name="Liu E.T."/>
            <person name="Brusic V."/>
            <person name="Quackenbush J."/>
            <person name="Wahlestedt C."/>
            <person name="Mattick J.S."/>
            <person name="Hume D.A."/>
            <person name="Kai C."/>
            <person name="Sasaki D."/>
            <person name="Tomaru Y."/>
            <person name="Fukuda S."/>
            <person name="Kanamori-Katayama M."/>
            <person name="Suzuki M."/>
            <person name="Aoki J."/>
            <person name="Arakawa T."/>
            <person name="Iida J."/>
            <person name="Imamura K."/>
            <person name="Itoh M."/>
            <person name="Kato T."/>
            <person name="Kawaji H."/>
            <person name="Kawagashira N."/>
            <person name="Kawashima T."/>
            <person name="Kojima M."/>
            <person name="Kondo S."/>
            <person name="Konno H."/>
            <person name="Nakano K."/>
            <person name="Ninomiya N."/>
            <person name="Nishio T."/>
            <person name="Okada M."/>
            <person name="Plessy C."/>
            <person name="Shibata K."/>
            <person name="Shiraki T."/>
            <person name="Suzuki S."/>
            <person name="Tagami M."/>
            <person name="Waki K."/>
            <person name="Watahiki A."/>
            <person name="Okamura-Oho Y."/>
            <person name="Suzuki H."/>
            <person name="Kawai J."/>
            <person name="Hayashizaki Y."/>
        </authorList>
    </citation>
    <scope>NUCLEOTIDE SEQUENCE [LARGE SCALE MRNA]</scope>
    <source>
        <strain>C57BL/6J</strain>
        <tissue>Embryonic liver</tissue>
        <tissue>Heart</tissue>
    </source>
</reference>
<reference key="3">
    <citation type="journal article" date="2004" name="Genome Res.">
        <title>The status, quality, and expansion of the NIH full-length cDNA project: the Mammalian Gene Collection (MGC).</title>
        <authorList>
            <consortium name="The MGC Project Team"/>
        </authorList>
    </citation>
    <scope>NUCLEOTIDE SEQUENCE [LARGE SCALE MRNA] OF 332-538</scope>
    <source>
        <strain>FVB/N</strain>
        <tissue>Mammary gland</tissue>
    </source>
</reference>
<reference key="4">
    <citation type="journal article" date="1999" name="J. Biol. Chem.">
        <title>Identification of Tek/Tie2 binding partners. Binding to a multifunctional docking site mediates cell survival and migration.</title>
        <authorList>
            <person name="Jones N."/>
            <person name="Master Z."/>
            <person name="Jones J."/>
            <person name="Bouchard D."/>
            <person name="Gunji Y."/>
            <person name="Sasaki H."/>
            <person name="Daly R."/>
            <person name="Alitalo K."/>
            <person name="Dumont D.J."/>
        </authorList>
    </citation>
    <scope>INTERACTION WITH TEK/TIE2</scope>
</reference>
<reference key="5">
    <citation type="journal article" date="2007" name="Proc. Natl. Acad. Sci. U.S.A.">
        <title>Large-scale phosphorylation analysis of mouse liver.</title>
        <authorList>
            <person name="Villen J."/>
            <person name="Beausoleil S.A."/>
            <person name="Gerber S.A."/>
            <person name="Gygi S.P."/>
        </authorList>
    </citation>
    <scope>IDENTIFICATION BY MASS SPECTROMETRY [LARGE SCALE ANALYSIS]</scope>
    <source>
        <tissue>Liver</tissue>
    </source>
</reference>
<reference key="6">
    <citation type="journal article" date="2010" name="Cell">
        <title>A tissue-specific atlas of mouse protein phosphorylation and expression.</title>
        <authorList>
            <person name="Huttlin E.L."/>
            <person name="Jedrychowski M.P."/>
            <person name="Elias J.E."/>
            <person name="Goswami T."/>
            <person name="Rad R."/>
            <person name="Beausoleil S.A."/>
            <person name="Villen J."/>
            <person name="Haas W."/>
            <person name="Sowa M.E."/>
            <person name="Gygi S.P."/>
        </authorList>
    </citation>
    <scope>PHOSPHORYLATION [LARGE SCALE ANALYSIS] AT SER-373</scope>
    <scope>IDENTIFICATION BY MASS SPECTROMETRY [LARGE SCALE ANALYSIS]</scope>
    <source>
        <tissue>Brown adipose tissue</tissue>
        <tissue>Heart</tissue>
        <tissue>Kidney</tissue>
        <tissue>Liver</tissue>
        <tissue>Lung</tissue>
        <tissue>Testis</tissue>
    </source>
</reference>
<comment type="function">
    <text evidence="1">Adapter protein which modulates coupling of cell surface receptor kinases with specific signaling pathways. Binds to, and suppresses signals from, the activated insulin receptor (INSR). Potent inhibitor of insulin-stimulated MAPK3 phosphorylation. Plays a critical role regulating PDPK1 membrane translocation in response to insulin stimulation and serves as an adapter protein to recruit PDPK1 to activated insulin receptor, thus promoting PKB/AKT1 phosphorylation and transduction of the insulin signal (By similarity).</text>
</comment>
<comment type="subunit">
    <text evidence="1 8">Interacts with the cytoplasmic domain of the autophosphorylated insulin receptor, through the SH2 domain. Interacts with GRB14 (via BPS domain); this interaction protects the tyrosines in the activation loop on INSR from dephosphorylation (By similarity). Binds to the ankyrin repeat region of TNKS2 via its N-terminus. Interacts with activated NRAS (By similarity). Interacts (via SH2 domain) with TEK/TIE2 (tyrosine phosphorylated).</text>
</comment>
<comment type="interaction">
    <interactant intactId="EBI-8347358">
        <id>Q9JLM9</id>
    </interactant>
    <interactant intactId="EBI-8417095">
        <id>P29973</id>
        <label>CNGA1</label>
    </interactant>
    <organismsDiffer>true</organismsDiffer>
    <experiments>2</experiments>
</comment>
<comment type="subcellular location">
    <subcellularLocation>
        <location evidence="3">Cytoplasm</location>
    </subcellularLocation>
    <subcellularLocation>
        <location evidence="3">Endosome membrane</location>
        <topology evidence="3">Peripheral membrane protein</topology>
    </subcellularLocation>
    <text evidence="3">Upon insulin stimulation, translocates to the plasma membrane.</text>
</comment>
<comment type="domain">
    <text evidence="1">The PH domain binds relatively non-specifically and with low affinity to several phosphoinositides, the best binder being PI(3,4,5)P3.</text>
</comment>
<comment type="PTM">
    <text evidence="1">Phosphorylated on serine residues. Phosphorylated on tyrosine residues by TEK/TIE2 (By similarity).</text>
</comment>
<comment type="similarity">
    <text evidence="9">Belongs to the GRB7/10/14 family.</text>
</comment>
<keyword id="KW-0007">Acetylation</keyword>
<keyword id="KW-0963">Cytoplasm</keyword>
<keyword id="KW-0967">Endosome</keyword>
<keyword id="KW-0472">Membrane</keyword>
<keyword id="KW-0597">Phosphoprotein</keyword>
<keyword id="KW-1185">Reference proteome</keyword>
<keyword id="KW-0727">SH2 domain</keyword>
<proteinExistence type="evidence at protein level"/>
<organism>
    <name type="scientific">Mus musculus</name>
    <name type="common">Mouse</name>
    <dbReference type="NCBI Taxonomy" id="10090"/>
    <lineage>
        <taxon>Eukaryota</taxon>
        <taxon>Metazoa</taxon>
        <taxon>Chordata</taxon>
        <taxon>Craniata</taxon>
        <taxon>Vertebrata</taxon>
        <taxon>Euteleostomi</taxon>
        <taxon>Mammalia</taxon>
        <taxon>Eutheria</taxon>
        <taxon>Euarchontoglires</taxon>
        <taxon>Glires</taxon>
        <taxon>Rodentia</taxon>
        <taxon>Myomorpha</taxon>
        <taxon>Muroidea</taxon>
        <taxon>Muridae</taxon>
        <taxon>Murinae</taxon>
        <taxon>Mus</taxon>
        <taxon>Mus</taxon>
    </lineage>
</organism>
<dbReference type="EMBL" id="AF155647">
    <property type="protein sequence ID" value="AAF43996.1"/>
    <property type="molecule type" value="mRNA"/>
</dbReference>
<dbReference type="EMBL" id="AK010849">
    <property type="protein sequence ID" value="BAB27221.3"/>
    <property type="molecule type" value="mRNA"/>
</dbReference>
<dbReference type="EMBL" id="AK010903">
    <property type="protein sequence ID" value="BAB27256.3"/>
    <property type="molecule type" value="mRNA"/>
</dbReference>
<dbReference type="EMBL" id="AK147041">
    <property type="protein sequence ID" value="BAE27629.1"/>
    <property type="molecule type" value="mRNA"/>
</dbReference>
<dbReference type="EMBL" id="BC021820">
    <property type="protein sequence ID" value="AAH21820.1"/>
    <property type="molecule type" value="mRNA"/>
</dbReference>
<dbReference type="CCDS" id="CCDS16071.1"/>
<dbReference type="RefSeq" id="NP_057928.1">
    <property type="nucleotide sequence ID" value="NM_016719.2"/>
</dbReference>
<dbReference type="SMR" id="Q9JLM9"/>
<dbReference type="BioGRID" id="206154">
    <property type="interactions" value="3"/>
</dbReference>
<dbReference type="FunCoup" id="Q9JLM9">
    <property type="interactions" value="953"/>
</dbReference>
<dbReference type="IntAct" id="Q9JLM9">
    <property type="interactions" value="1"/>
</dbReference>
<dbReference type="MINT" id="Q9JLM9"/>
<dbReference type="STRING" id="10090.ENSMUSP00000028252"/>
<dbReference type="iPTMnet" id="Q9JLM9"/>
<dbReference type="PhosphoSitePlus" id="Q9JLM9"/>
<dbReference type="jPOST" id="Q9JLM9"/>
<dbReference type="PaxDb" id="10090-ENSMUSP00000028252"/>
<dbReference type="ProteomicsDB" id="271294"/>
<dbReference type="Pumba" id="Q9JLM9"/>
<dbReference type="Antibodypedia" id="33757">
    <property type="antibodies" value="185 antibodies from 29 providers"/>
</dbReference>
<dbReference type="DNASU" id="50915"/>
<dbReference type="Ensembl" id="ENSMUST00000028252.14">
    <property type="protein sequence ID" value="ENSMUSP00000028252.8"/>
    <property type="gene ID" value="ENSMUSG00000026888.15"/>
</dbReference>
<dbReference type="GeneID" id="50915"/>
<dbReference type="KEGG" id="mmu:50915"/>
<dbReference type="UCSC" id="uc008jvx.2">
    <property type="organism name" value="mouse"/>
</dbReference>
<dbReference type="AGR" id="MGI:1355324"/>
<dbReference type="CTD" id="2888"/>
<dbReference type="MGI" id="MGI:1355324">
    <property type="gene designation" value="Grb14"/>
</dbReference>
<dbReference type="VEuPathDB" id="HostDB:ENSMUSG00000026888"/>
<dbReference type="eggNOG" id="KOG3751">
    <property type="taxonomic scope" value="Eukaryota"/>
</dbReference>
<dbReference type="GeneTree" id="ENSGT00940000158609"/>
<dbReference type="HOGENOM" id="CLU_023207_0_1_1"/>
<dbReference type="InParanoid" id="Q9JLM9"/>
<dbReference type="OMA" id="VEVHSKW"/>
<dbReference type="OrthoDB" id="5990423at2759"/>
<dbReference type="PhylomeDB" id="Q9JLM9"/>
<dbReference type="TreeFam" id="TF317511"/>
<dbReference type="Reactome" id="R-MMU-210993">
    <property type="pathway name" value="Tie2 Signaling"/>
</dbReference>
<dbReference type="BioGRID-ORCS" id="50915">
    <property type="hits" value="1 hit in 76 CRISPR screens"/>
</dbReference>
<dbReference type="PRO" id="PR:Q9JLM9"/>
<dbReference type="Proteomes" id="UP000000589">
    <property type="component" value="Chromosome 2"/>
</dbReference>
<dbReference type="RNAct" id="Q9JLM9">
    <property type="molecule type" value="protein"/>
</dbReference>
<dbReference type="Bgee" id="ENSMUSG00000026888">
    <property type="expression patterns" value="Expressed in interventricular septum and 237 other cell types or tissues"/>
</dbReference>
<dbReference type="ExpressionAtlas" id="Q9JLM9">
    <property type="expression patterns" value="baseline and differential"/>
</dbReference>
<dbReference type="GO" id="GO:0010008">
    <property type="term" value="C:endosome membrane"/>
    <property type="evidence" value="ECO:0007669"/>
    <property type="project" value="UniProtKB-SubCell"/>
</dbReference>
<dbReference type="GO" id="GO:0005886">
    <property type="term" value="C:plasma membrane"/>
    <property type="evidence" value="ECO:0007669"/>
    <property type="project" value="Ensembl"/>
</dbReference>
<dbReference type="GO" id="GO:0030674">
    <property type="term" value="F:protein-macromolecule adaptor activity"/>
    <property type="evidence" value="ECO:0000314"/>
    <property type="project" value="MGI"/>
</dbReference>
<dbReference type="GO" id="GO:0030971">
    <property type="term" value="F:receptor tyrosine kinase binding"/>
    <property type="evidence" value="ECO:0007669"/>
    <property type="project" value="Ensembl"/>
</dbReference>
<dbReference type="GO" id="GO:0046627">
    <property type="term" value="P:negative regulation of insulin receptor signaling pathway"/>
    <property type="evidence" value="ECO:0007669"/>
    <property type="project" value="Ensembl"/>
</dbReference>
<dbReference type="GO" id="GO:0007165">
    <property type="term" value="P:signal transduction"/>
    <property type="evidence" value="ECO:0000304"/>
    <property type="project" value="MGI"/>
</dbReference>
<dbReference type="CDD" id="cd01259">
    <property type="entry name" value="PH_APBB1IP"/>
    <property type="match status" value="1"/>
</dbReference>
<dbReference type="CDD" id="cd10414">
    <property type="entry name" value="SH2_Grb14"/>
    <property type="match status" value="1"/>
</dbReference>
<dbReference type="FunFam" id="3.30.505.10:FF:000015">
    <property type="entry name" value="Growth factor receptor-bound protein 10 isoform X1"/>
    <property type="match status" value="1"/>
</dbReference>
<dbReference type="FunFam" id="2.30.29.30:FF:000714">
    <property type="entry name" value="Growth factor receptor-bound protein 14"/>
    <property type="match status" value="1"/>
</dbReference>
<dbReference type="FunFam" id="3.10.20.90:FF:000133">
    <property type="entry name" value="growth factor receptor-bound protein 14 isoform X2"/>
    <property type="match status" value="1"/>
</dbReference>
<dbReference type="Gene3D" id="3.10.20.90">
    <property type="entry name" value="Phosphatidylinositol 3-kinase Catalytic Subunit, Chain A, domain 1"/>
    <property type="match status" value="1"/>
</dbReference>
<dbReference type="Gene3D" id="2.30.29.30">
    <property type="entry name" value="Pleckstrin-homology domain (PH domain)/Phosphotyrosine-binding domain (PTB)"/>
    <property type="match status" value="1"/>
</dbReference>
<dbReference type="Gene3D" id="3.30.505.10">
    <property type="entry name" value="SH2 domain"/>
    <property type="match status" value="1"/>
</dbReference>
<dbReference type="InterPro" id="IPR015042">
    <property type="entry name" value="BPS-dom"/>
</dbReference>
<dbReference type="InterPro" id="IPR039664">
    <property type="entry name" value="GRB/APBB1IP"/>
</dbReference>
<dbReference type="InterPro" id="IPR035034">
    <property type="entry name" value="Grb14_SH2"/>
</dbReference>
<dbReference type="InterPro" id="IPR011993">
    <property type="entry name" value="PH-like_dom_sf"/>
</dbReference>
<dbReference type="InterPro" id="IPR039665">
    <property type="entry name" value="PH_APBB1IP"/>
</dbReference>
<dbReference type="InterPro" id="IPR001849">
    <property type="entry name" value="PH_domain"/>
</dbReference>
<dbReference type="InterPro" id="IPR000159">
    <property type="entry name" value="RA_dom"/>
</dbReference>
<dbReference type="InterPro" id="IPR000980">
    <property type="entry name" value="SH2"/>
</dbReference>
<dbReference type="InterPro" id="IPR036860">
    <property type="entry name" value="SH2_dom_sf"/>
</dbReference>
<dbReference type="InterPro" id="IPR029071">
    <property type="entry name" value="Ubiquitin-like_domsf"/>
</dbReference>
<dbReference type="PANTHER" id="PTHR11243">
    <property type="entry name" value="GROWTH FACTOR RECEPTOR-BOUND PROTEIN"/>
    <property type="match status" value="1"/>
</dbReference>
<dbReference type="PANTHER" id="PTHR11243:SF22">
    <property type="entry name" value="GROWTH FACTOR RECEPTOR-BOUND PROTEIN 14"/>
    <property type="match status" value="1"/>
</dbReference>
<dbReference type="Pfam" id="PF08947">
    <property type="entry name" value="BPS"/>
    <property type="match status" value="1"/>
</dbReference>
<dbReference type="Pfam" id="PF00169">
    <property type="entry name" value="PH"/>
    <property type="match status" value="1"/>
</dbReference>
<dbReference type="Pfam" id="PF21989">
    <property type="entry name" value="RA_2"/>
    <property type="match status" value="1"/>
</dbReference>
<dbReference type="Pfam" id="PF00017">
    <property type="entry name" value="SH2"/>
    <property type="match status" value="1"/>
</dbReference>
<dbReference type="PRINTS" id="PR00401">
    <property type="entry name" value="SH2DOMAIN"/>
</dbReference>
<dbReference type="SMART" id="SM00233">
    <property type="entry name" value="PH"/>
    <property type="match status" value="1"/>
</dbReference>
<dbReference type="SMART" id="SM00314">
    <property type="entry name" value="RA"/>
    <property type="match status" value="1"/>
</dbReference>
<dbReference type="SMART" id="SM00252">
    <property type="entry name" value="SH2"/>
    <property type="match status" value="1"/>
</dbReference>
<dbReference type="SUPFAM" id="SSF50729">
    <property type="entry name" value="PH domain-like"/>
    <property type="match status" value="1"/>
</dbReference>
<dbReference type="SUPFAM" id="SSF55550">
    <property type="entry name" value="SH2 domain"/>
    <property type="match status" value="1"/>
</dbReference>
<dbReference type="SUPFAM" id="SSF54236">
    <property type="entry name" value="Ubiquitin-like"/>
    <property type="match status" value="1"/>
</dbReference>
<dbReference type="PROSITE" id="PS50003">
    <property type="entry name" value="PH_DOMAIN"/>
    <property type="match status" value="1"/>
</dbReference>
<dbReference type="PROSITE" id="PS50200">
    <property type="entry name" value="RA"/>
    <property type="match status" value="1"/>
</dbReference>
<dbReference type="PROSITE" id="PS50001">
    <property type="entry name" value="SH2"/>
    <property type="match status" value="1"/>
</dbReference>
<feature type="initiator methionine" description="Removed" evidence="3">
    <location>
        <position position="1"/>
    </location>
</feature>
<feature type="chain" id="PRO_0000150349" description="Growth factor receptor-bound protein 14">
    <location>
        <begin position="2"/>
        <end position="538"/>
    </location>
</feature>
<feature type="domain" description="Ras-associating" evidence="5">
    <location>
        <begin position="104"/>
        <end position="190"/>
    </location>
</feature>
<feature type="domain" description="PH" evidence="4">
    <location>
        <begin position="232"/>
        <end position="340"/>
    </location>
</feature>
<feature type="domain" description="SH2" evidence="6">
    <location>
        <begin position="437"/>
        <end position="533"/>
    </location>
</feature>
<feature type="region of interest" description="Disordered" evidence="7">
    <location>
        <begin position="1"/>
        <end position="20"/>
    </location>
</feature>
<feature type="modified residue" description="N-acetylthreonine" evidence="3">
    <location>
        <position position="2"/>
    </location>
</feature>
<feature type="modified residue" description="Phosphoserine" evidence="2">
    <location>
        <position position="370"/>
    </location>
</feature>
<feature type="modified residue" description="Phosphoserine" evidence="10">
    <location>
        <position position="373"/>
    </location>
</feature>